<dbReference type="EC" id="2.1.3.-" evidence="1"/>
<dbReference type="EMBL" id="CT573326">
    <property type="protein sequence ID" value="CAK17057.1"/>
    <property type="molecule type" value="Genomic_DNA"/>
</dbReference>
<dbReference type="RefSeq" id="WP_011535428.1">
    <property type="nucleotide sequence ID" value="NC_008027.1"/>
</dbReference>
<dbReference type="SMR" id="Q1I5M8"/>
<dbReference type="STRING" id="384676.PSEEN4372"/>
<dbReference type="GeneID" id="32807372"/>
<dbReference type="KEGG" id="pen:PSEEN4372"/>
<dbReference type="eggNOG" id="COG2226">
    <property type="taxonomic scope" value="Bacteria"/>
</dbReference>
<dbReference type="HOGENOM" id="CLU_078475_0_0_6"/>
<dbReference type="OrthoDB" id="9779941at2"/>
<dbReference type="Proteomes" id="UP000000658">
    <property type="component" value="Chromosome"/>
</dbReference>
<dbReference type="GO" id="GO:0016743">
    <property type="term" value="F:carboxyl- or carbamoyltransferase activity"/>
    <property type="evidence" value="ECO:0007669"/>
    <property type="project" value="UniProtKB-UniRule"/>
</dbReference>
<dbReference type="GO" id="GO:1904047">
    <property type="term" value="F:S-adenosyl-L-methionine binding"/>
    <property type="evidence" value="ECO:0007669"/>
    <property type="project" value="UniProtKB-UniRule"/>
</dbReference>
<dbReference type="GO" id="GO:0002098">
    <property type="term" value="P:tRNA wobble uridine modification"/>
    <property type="evidence" value="ECO:0007669"/>
    <property type="project" value="InterPro"/>
</dbReference>
<dbReference type="CDD" id="cd02440">
    <property type="entry name" value="AdoMet_MTases"/>
    <property type="match status" value="1"/>
</dbReference>
<dbReference type="Gene3D" id="3.40.50.150">
    <property type="entry name" value="Vaccinia Virus protein VP39"/>
    <property type="match status" value="1"/>
</dbReference>
<dbReference type="HAMAP" id="MF_01589">
    <property type="entry name" value="Cx_SAM_synthase"/>
    <property type="match status" value="1"/>
</dbReference>
<dbReference type="InterPro" id="IPR005271">
    <property type="entry name" value="CmoA"/>
</dbReference>
<dbReference type="InterPro" id="IPR041698">
    <property type="entry name" value="Methyltransf_25"/>
</dbReference>
<dbReference type="InterPro" id="IPR029063">
    <property type="entry name" value="SAM-dependent_MTases_sf"/>
</dbReference>
<dbReference type="NCBIfam" id="TIGR00740">
    <property type="entry name" value="carboxy-S-adenosyl-L-methionine synthase CmoA"/>
    <property type="match status" value="1"/>
</dbReference>
<dbReference type="NCBIfam" id="NF011995">
    <property type="entry name" value="PRK15451.1"/>
    <property type="match status" value="1"/>
</dbReference>
<dbReference type="PANTHER" id="PTHR43861:SF2">
    <property type="entry name" value="CARBOXY-S-ADENOSYL-L-METHIONINE SYNTHASE"/>
    <property type="match status" value="1"/>
</dbReference>
<dbReference type="PANTHER" id="PTHR43861">
    <property type="entry name" value="TRANS-ACONITATE 2-METHYLTRANSFERASE-RELATED"/>
    <property type="match status" value="1"/>
</dbReference>
<dbReference type="Pfam" id="PF13649">
    <property type="entry name" value="Methyltransf_25"/>
    <property type="match status" value="1"/>
</dbReference>
<dbReference type="PIRSF" id="PIRSF006325">
    <property type="entry name" value="MeTrfase_bac"/>
    <property type="match status" value="1"/>
</dbReference>
<dbReference type="SUPFAM" id="SSF53335">
    <property type="entry name" value="S-adenosyl-L-methionine-dependent methyltransferases"/>
    <property type="match status" value="1"/>
</dbReference>
<sequence length="247" mass="27643">MSKEPDRLFAQPLEQVPDFVFNEDVVQVFPDMIKRSVPGYPTIVENLGVLAARFAQPHSALYDLGASLGAVSQSLRRHVRSDGCRVIAVDNSAAMVERCRQYLTAQDSMFQELLPVQVLEADILTLPFEPASVVAMNFTLQFIAPEQRLALLGRIRQALLPGGALILSEKLRFADDQEQQLLNELHLDFKRANGYSELEIAQKRSAIENVMKPDTLETHKERLHAAGFSKVVPWFQCLNFASLIALP</sequence>
<reference key="1">
    <citation type="journal article" date="2006" name="Nat. Biotechnol.">
        <title>Complete genome sequence of the entomopathogenic and metabolically versatile soil bacterium Pseudomonas entomophila.</title>
        <authorList>
            <person name="Vodovar N."/>
            <person name="Vallenet D."/>
            <person name="Cruveiller S."/>
            <person name="Rouy Z."/>
            <person name="Barbe V."/>
            <person name="Acosta C."/>
            <person name="Cattolico L."/>
            <person name="Jubin C."/>
            <person name="Lajus A."/>
            <person name="Segurens B."/>
            <person name="Vacherie B."/>
            <person name="Wincker P."/>
            <person name="Weissenbach J."/>
            <person name="Lemaitre B."/>
            <person name="Medigue C."/>
            <person name="Boccard F."/>
        </authorList>
    </citation>
    <scope>NUCLEOTIDE SEQUENCE [LARGE SCALE GENOMIC DNA]</scope>
    <source>
        <strain>L48</strain>
    </source>
</reference>
<accession>Q1I5M8</accession>
<proteinExistence type="inferred from homology"/>
<gene>
    <name evidence="1" type="primary">cmoA</name>
    <name type="ordered locus">PSEEN4372</name>
</gene>
<protein>
    <recommendedName>
        <fullName evidence="1">Carboxy-S-adenosyl-L-methionine synthase</fullName>
        <shortName evidence="1">Cx-SAM synthase</shortName>
        <ecNumber evidence="1">2.1.3.-</ecNumber>
    </recommendedName>
</protein>
<organism>
    <name type="scientific">Pseudomonas entomophila (strain L48)</name>
    <dbReference type="NCBI Taxonomy" id="384676"/>
    <lineage>
        <taxon>Bacteria</taxon>
        <taxon>Pseudomonadati</taxon>
        <taxon>Pseudomonadota</taxon>
        <taxon>Gammaproteobacteria</taxon>
        <taxon>Pseudomonadales</taxon>
        <taxon>Pseudomonadaceae</taxon>
        <taxon>Pseudomonas</taxon>
    </lineage>
</organism>
<comment type="function">
    <text evidence="1">Catalyzes the conversion of S-adenosyl-L-methionine (SAM) to carboxy-S-adenosyl-L-methionine (Cx-SAM).</text>
</comment>
<comment type="catalytic activity">
    <reaction evidence="1">
        <text>prephenate + S-adenosyl-L-methionine = carboxy-S-adenosyl-L-methionine + 3-phenylpyruvate + H2O</text>
        <dbReference type="Rhea" id="RHEA:51692"/>
        <dbReference type="ChEBI" id="CHEBI:15377"/>
        <dbReference type="ChEBI" id="CHEBI:18005"/>
        <dbReference type="ChEBI" id="CHEBI:29934"/>
        <dbReference type="ChEBI" id="CHEBI:59789"/>
        <dbReference type="ChEBI" id="CHEBI:134278"/>
    </reaction>
</comment>
<comment type="subunit">
    <text evidence="1">Homodimer.</text>
</comment>
<comment type="similarity">
    <text evidence="1">Belongs to the class I-like SAM-binding methyltransferase superfamily. Cx-SAM synthase family.</text>
</comment>
<evidence type="ECO:0000255" key="1">
    <source>
        <dbReference type="HAMAP-Rule" id="MF_01589"/>
    </source>
</evidence>
<keyword id="KW-0949">S-adenosyl-L-methionine</keyword>
<keyword id="KW-0808">Transferase</keyword>
<name>CMOA_PSEE4</name>
<feature type="chain" id="PRO_0000314358" description="Carboxy-S-adenosyl-L-methionine synthase">
    <location>
        <begin position="1"/>
        <end position="247"/>
    </location>
</feature>
<feature type="binding site" evidence="1">
    <location>
        <position position="40"/>
    </location>
    <ligand>
        <name>S-adenosyl-L-methionine</name>
        <dbReference type="ChEBI" id="CHEBI:59789"/>
    </ligand>
</feature>
<feature type="binding site" evidence="1">
    <location>
        <begin position="65"/>
        <end position="67"/>
    </location>
    <ligand>
        <name>S-adenosyl-L-methionine</name>
        <dbReference type="ChEBI" id="CHEBI:59789"/>
    </ligand>
</feature>
<feature type="binding site" evidence="1">
    <location>
        <begin position="90"/>
        <end position="91"/>
    </location>
    <ligand>
        <name>S-adenosyl-L-methionine</name>
        <dbReference type="ChEBI" id="CHEBI:59789"/>
    </ligand>
</feature>
<feature type="binding site" evidence="1">
    <location>
        <begin position="122"/>
        <end position="123"/>
    </location>
    <ligand>
        <name>S-adenosyl-L-methionine</name>
        <dbReference type="ChEBI" id="CHEBI:59789"/>
    </ligand>
</feature>
<feature type="binding site" evidence="1">
    <location>
        <position position="137"/>
    </location>
    <ligand>
        <name>S-adenosyl-L-methionine</name>
        <dbReference type="ChEBI" id="CHEBI:59789"/>
    </ligand>
</feature>
<feature type="binding site" evidence="1">
    <location>
        <position position="204"/>
    </location>
    <ligand>
        <name>S-adenosyl-L-methionine</name>
        <dbReference type="ChEBI" id="CHEBI:59789"/>
    </ligand>
</feature>